<feature type="chain" id="PRO_0000415709" description="Flagellar basal body rod protein FlgB">
    <location>
        <begin position="1"/>
        <end position="137"/>
    </location>
</feature>
<evidence type="ECO:0000250" key="1">
    <source>
        <dbReference type="UniProtKB" id="P16437"/>
    </source>
</evidence>
<evidence type="ECO:0000255" key="2"/>
<evidence type="ECO:0000312" key="3">
    <source>
        <dbReference type="EMBL" id="ACT22781.1"/>
    </source>
</evidence>
<proteinExistence type="inferred from homology"/>
<organism>
    <name type="scientific">Yersinia ruckeri</name>
    <dbReference type="NCBI Taxonomy" id="29486"/>
    <lineage>
        <taxon>Bacteria</taxon>
        <taxon>Pseudomonadati</taxon>
        <taxon>Pseudomonadota</taxon>
        <taxon>Gammaproteobacteria</taxon>
        <taxon>Enterobacterales</taxon>
        <taxon>Yersiniaceae</taxon>
        <taxon>Yersinia</taxon>
    </lineage>
</organism>
<name>FLGB_YERRU</name>
<keyword id="KW-0975">Bacterial flagellum</keyword>
<sequence length="137" mass="15162">MLDKLDGALRFQQEALNLRAQRQEILSANIANADTPGFQARDIDFSSQLQKVMEQGRVNGSGMSLSLTAARHIPAQNIQPPDLDLLFRVPDQPSMDGNTVDMDRERTNFADNSLKYQTDLTILGGQIKGMMSVLQQG</sequence>
<protein>
    <recommendedName>
        <fullName evidence="1 3">Flagellar basal body rod protein FlgB</fullName>
    </recommendedName>
</protein>
<gene>
    <name evidence="3" type="primary">flgB</name>
</gene>
<accession>C8BKB7</accession>
<reference evidence="3" key="1">
    <citation type="journal article" date="2009" name="Appl. Environ. Microbiol.">
        <title>Identification of flagellar motility genes in Yersinia ruckeri by transposon mutagenesis.</title>
        <authorList>
            <person name="Evenhuis J.P."/>
            <person name="LaPatra S.E."/>
            <person name="Verner-Jeffreys D.W."/>
            <person name="Dalsgaard I."/>
            <person name="Welch T.J."/>
        </authorList>
    </citation>
    <scope>NUCLEOTIDE SEQUENCE [GENOMIC DNA]</scope>
    <source>
        <strain evidence="3">CSF07-82</strain>
    </source>
</reference>
<comment type="function">
    <text evidence="1">Structural component of flagellum, the bacterial motility apparatus. Part of the rod structure of flagellar basal body (By similarity).</text>
</comment>
<comment type="subunit">
    <text evidence="1">The basal body constitutes a major portion of the flagellar organelle and consists of a number of rings mounted on a central rod. In Gram-negative bacteria, at least four rings, L, P, S and M are present, whereas Gram-positive bacteria lack the L and P rings. The rod consists of about 26 subunits of FlgG in the distal portion, and FlgB, FlgC and FlgF build up the proximal portion of the rod with about 6 subunits each. Rod assembly occurs by export via the flagellum-specific pathway of its constituent proteins and by their incorporation into the rod structure in the probable order of FlgB, FlgC, FlgF and FlgG. Another protein, FliE, also assembles onto the stable rod structure (By similarity).</text>
</comment>
<comment type="subcellular location">
    <subcellularLocation>
        <location evidence="1">Bacterial flagellum basal body</location>
    </subcellularLocation>
</comment>
<comment type="similarity">
    <text evidence="2">Belongs to the flagella basal body rod proteins family.</text>
</comment>
<dbReference type="EMBL" id="GQ217534">
    <property type="protein sequence ID" value="ACT22781.1"/>
    <property type="molecule type" value="Genomic_DNA"/>
</dbReference>
<dbReference type="RefSeq" id="WP_004720736.1">
    <property type="nucleotide sequence ID" value="NZ_VDHI01000013.1"/>
</dbReference>
<dbReference type="SMR" id="C8BKB7"/>
<dbReference type="STRING" id="29486.UGYR_03715"/>
<dbReference type="GeneID" id="66879924"/>
<dbReference type="eggNOG" id="COG1815">
    <property type="taxonomic scope" value="Bacteria"/>
</dbReference>
<dbReference type="OrthoDB" id="9788334at2"/>
<dbReference type="GO" id="GO:0030694">
    <property type="term" value="C:bacterial-type flagellum basal body, rod"/>
    <property type="evidence" value="ECO:0007669"/>
    <property type="project" value="InterPro"/>
</dbReference>
<dbReference type="GO" id="GO:0071973">
    <property type="term" value="P:bacterial-type flagellum-dependent cell motility"/>
    <property type="evidence" value="ECO:0007669"/>
    <property type="project" value="InterPro"/>
</dbReference>
<dbReference type="InterPro" id="IPR001444">
    <property type="entry name" value="Flag_bb_rod_N"/>
</dbReference>
<dbReference type="InterPro" id="IPR019776">
    <property type="entry name" value="Flagellar_basal_body_rod_CS"/>
</dbReference>
<dbReference type="InterPro" id="IPR006300">
    <property type="entry name" value="FlgB"/>
</dbReference>
<dbReference type="NCBIfam" id="TIGR01396">
    <property type="entry name" value="FlgB"/>
    <property type="match status" value="1"/>
</dbReference>
<dbReference type="PANTHER" id="PTHR30435:SF12">
    <property type="entry name" value="FLAGELLAR BASAL BODY ROD PROTEIN FLGB"/>
    <property type="match status" value="1"/>
</dbReference>
<dbReference type="PANTHER" id="PTHR30435">
    <property type="entry name" value="FLAGELLAR PROTEIN"/>
    <property type="match status" value="1"/>
</dbReference>
<dbReference type="Pfam" id="PF00460">
    <property type="entry name" value="Flg_bb_rod"/>
    <property type="match status" value="1"/>
</dbReference>
<dbReference type="PIRSF" id="PIRSF002889">
    <property type="entry name" value="Rod_FlgB"/>
    <property type="match status" value="1"/>
</dbReference>
<dbReference type="PROSITE" id="PS00588">
    <property type="entry name" value="FLAGELLA_BB_ROD"/>
    <property type="match status" value="1"/>
</dbReference>